<feature type="chain" id="PRO_1000022255" description="Potassium-transporting ATPase KdpC subunit">
    <location>
        <begin position="1"/>
        <end position="193"/>
    </location>
</feature>
<feature type="transmembrane region" description="Helical" evidence="1">
    <location>
        <begin position="9"/>
        <end position="29"/>
    </location>
</feature>
<protein>
    <recommendedName>
        <fullName evidence="1">Potassium-transporting ATPase KdpC subunit</fullName>
    </recommendedName>
    <alternativeName>
        <fullName evidence="1">ATP phosphohydrolase [potassium-transporting] C chain</fullName>
    </alternativeName>
    <alternativeName>
        <fullName evidence="1">Potassium-binding and translocating subunit C</fullName>
    </alternativeName>
    <alternativeName>
        <fullName evidence="1">Potassium-translocating ATPase C chain</fullName>
    </alternativeName>
</protein>
<dbReference type="EMBL" id="CP000360">
    <property type="protein sequence ID" value="ABF39517.1"/>
    <property type="molecule type" value="Genomic_DNA"/>
</dbReference>
<dbReference type="RefSeq" id="WP_011521319.1">
    <property type="nucleotide sequence ID" value="NC_008009.1"/>
</dbReference>
<dbReference type="SMR" id="Q1IUD3"/>
<dbReference type="STRING" id="204669.Acid345_0512"/>
<dbReference type="EnsemblBacteria" id="ABF39517">
    <property type="protein sequence ID" value="ABF39517"/>
    <property type="gene ID" value="Acid345_0512"/>
</dbReference>
<dbReference type="KEGG" id="aba:Acid345_0512"/>
<dbReference type="eggNOG" id="COG2156">
    <property type="taxonomic scope" value="Bacteria"/>
</dbReference>
<dbReference type="HOGENOM" id="CLU_077094_2_0_0"/>
<dbReference type="OrthoDB" id="9809491at2"/>
<dbReference type="Proteomes" id="UP000002432">
    <property type="component" value="Chromosome"/>
</dbReference>
<dbReference type="GO" id="GO:0005886">
    <property type="term" value="C:plasma membrane"/>
    <property type="evidence" value="ECO:0007669"/>
    <property type="project" value="UniProtKB-SubCell"/>
</dbReference>
<dbReference type="GO" id="GO:0005524">
    <property type="term" value="F:ATP binding"/>
    <property type="evidence" value="ECO:0007669"/>
    <property type="project" value="UniProtKB-UniRule"/>
</dbReference>
<dbReference type="GO" id="GO:0008556">
    <property type="term" value="F:P-type potassium transmembrane transporter activity"/>
    <property type="evidence" value="ECO:0007669"/>
    <property type="project" value="InterPro"/>
</dbReference>
<dbReference type="HAMAP" id="MF_00276">
    <property type="entry name" value="KdpC"/>
    <property type="match status" value="1"/>
</dbReference>
<dbReference type="InterPro" id="IPR003820">
    <property type="entry name" value="KdpC"/>
</dbReference>
<dbReference type="NCBIfam" id="TIGR00681">
    <property type="entry name" value="kdpC"/>
    <property type="match status" value="1"/>
</dbReference>
<dbReference type="NCBIfam" id="NF001454">
    <property type="entry name" value="PRK00315.1"/>
    <property type="match status" value="1"/>
</dbReference>
<dbReference type="PANTHER" id="PTHR30042">
    <property type="entry name" value="POTASSIUM-TRANSPORTING ATPASE C CHAIN"/>
    <property type="match status" value="1"/>
</dbReference>
<dbReference type="PANTHER" id="PTHR30042:SF2">
    <property type="entry name" value="POTASSIUM-TRANSPORTING ATPASE KDPC SUBUNIT"/>
    <property type="match status" value="1"/>
</dbReference>
<dbReference type="Pfam" id="PF02669">
    <property type="entry name" value="KdpC"/>
    <property type="match status" value="1"/>
</dbReference>
<dbReference type="PIRSF" id="PIRSF001296">
    <property type="entry name" value="K_ATPase_KdpC"/>
    <property type="match status" value="1"/>
</dbReference>
<sequence>MKKNLITSVLMTVVTTVLLGLVYPLLITGLAQVFFKDKANGQIISANGHAIGSRIIGQPFTGPAYFHSRPSAAGNGYDASNSGGTNLGPTNQKLVDRVKQDVSALQPEANGKPIPVDMITTSASGLDPHVTPANAEFQVARVARERGMSETQLRQLVARHTEGRQVGFLGEPRVNVLELNLDLDGTQPMPTPR</sequence>
<reference key="1">
    <citation type="journal article" date="2009" name="Appl. Environ. Microbiol.">
        <title>Three genomes from the phylum Acidobacteria provide insight into the lifestyles of these microorganisms in soils.</title>
        <authorList>
            <person name="Ward N.L."/>
            <person name="Challacombe J.F."/>
            <person name="Janssen P.H."/>
            <person name="Henrissat B."/>
            <person name="Coutinho P.M."/>
            <person name="Wu M."/>
            <person name="Xie G."/>
            <person name="Haft D.H."/>
            <person name="Sait M."/>
            <person name="Badger J."/>
            <person name="Barabote R.D."/>
            <person name="Bradley B."/>
            <person name="Brettin T.S."/>
            <person name="Brinkac L.M."/>
            <person name="Bruce D."/>
            <person name="Creasy T."/>
            <person name="Daugherty S.C."/>
            <person name="Davidsen T.M."/>
            <person name="DeBoy R.T."/>
            <person name="Detter J.C."/>
            <person name="Dodson R.J."/>
            <person name="Durkin A.S."/>
            <person name="Ganapathy A."/>
            <person name="Gwinn-Giglio M."/>
            <person name="Han C.S."/>
            <person name="Khouri H."/>
            <person name="Kiss H."/>
            <person name="Kothari S.P."/>
            <person name="Madupu R."/>
            <person name="Nelson K.E."/>
            <person name="Nelson W.C."/>
            <person name="Paulsen I."/>
            <person name="Penn K."/>
            <person name="Ren Q."/>
            <person name="Rosovitz M.J."/>
            <person name="Selengut J.D."/>
            <person name="Shrivastava S."/>
            <person name="Sullivan S.A."/>
            <person name="Tapia R."/>
            <person name="Thompson L.S."/>
            <person name="Watkins K.L."/>
            <person name="Yang Q."/>
            <person name="Yu C."/>
            <person name="Zafar N."/>
            <person name="Zhou L."/>
            <person name="Kuske C.R."/>
        </authorList>
    </citation>
    <scope>NUCLEOTIDE SEQUENCE [LARGE SCALE GENOMIC DNA]</scope>
    <source>
        <strain>Ellin345</strain>
    </source>
</reference>
<accession>Q1IUD3</accession>
<evidence type="ECO:0000255" key="1">
    <source>
        <dbReference type="HAMAP-Rule" id="MF_00276"/>
    </source>
</evidence>
<comment type="function">
    <text evidence="1">Part of the high-affinity ATP-driven potassium transport (or Kdp) system, which catalyzes the hydrolysis of ATP coupled with the electrogenic transport of potassium into the cytoplasm. This subunit acts as a catalytic chaperone that increases the ATP-binding affinity of the ATP-hydrolyzing subunit KdpB by the formation of a transient KdpB/KdpC/ATP ternary complex.</text>
</comment>
<comment type="subunit">
    <text evidence="1">The system is composed of three essential subunits: KdpA, KdpB and KdpC.</text>
</comment>
<comment type="subcellular location">
    <subcellularLocation>
        <location evidence="1">Cell inner membrane</location>
        <topology evidence="1">Single-pass membrane protein</topology>
    </subcellularLocation>
</comment>
<comment type="similarity">
    <text evidence="1">Belongs to the KdpC family.</text>
</comment>
<name>KDPC_KORVE</name>
<keyword id="KW-0067">ATP-binding</keyword>
<keyword id="KW-0997">Cell inner membrane</keyword>
<keyword id="KW-1003">Cell membrane</keyword>
<keyword id="KW-0406">Ion transport</keyword>
<keyword id="KW-0472">Membrane</keyword>
<keyword id="KW-0547">Nucleotide-binding</keyword>
<keyword id="KW-0630">Potassium</keyword>
<keyword id="KW-0633">Potassium transport</keyword>
<keyword id="KW-1185">Reference proteome</keyword>
<keyword id="KW-0812">Transmembrane</keyword>
<keyword id="KW-1133">Transmembrane helix</keyword>
<keyword id="KW-0813">Transport</keyword>
<proteinExistence type="inferred from homology"/>
<gene>
    <name evidence="1" type="primary">kdpC</name>
    <name type="ordered locus">Acid345_0512</name>
</gene>
<organism>
    <name type="scientific">Koribacter versatilis (strain Ellin345)</name>
    <dbReference type="NCBI Taxonomy" id="204669"/>
    <lineage>
        <taxon>Bacteria</taxon>
        <taxon>Pseudomonadati</taxon>
        <taxon>Acidobacteriota</taxon>
        <taxon>Terriglobia</taxon>
        <taxon>Terriglobales</taxon>
        <taxon>Candidatus Korobacteraceae</taxon>
        <taxon>Candidatus Korobacter</taxon>
    </lineage>
</organism>